<reference key="1">
    <citation type="journal article" date="2008" name="PLoS Genet.">
        <title>Genomic islands in the pathogenic filamentous fungus Aspergillus fumigatus.</title>
        <authorList>
            <person name="Fedorova N.D."/>
            <person name="Khaldi N."/>
            <person name="Joardar V.S."/>
            <person name="Maiti R."/>
            <person name="Amedeo P."/>
            <person name="Anderson M.J."/>
            <person name="Crabtree J."/>
            <person name="Silva J.C."/>
            <person name="Badger J.H."/>
            <person name="Albarraq A."/>
            <person name="Angiuoli S."/>
            <person name="Bussey H."/>
            <person name="Bowyer P."/>
            <person name="Cotty P.J."/>
            <person name="Dyer P.S."/>
            <person name="Egan A."/>
            <person name="Galens K."/>
            <person name="Fraser-Liggett C.M."/>
            <person name="Haas B.J."/>
            <person name="Inman J.M."/>
            <person name="Kent R."/>
            <person name="Lemieux S."/>
            <person name="Malavazi I."/>
            <person name="Orvis J."/>
            <person name="Roemer T."/>
            <person name="Ronning C.M."/>
            <person name="Sundaram J.P."/>
            <person name="Sutton G."/>
            <person name="Turner G."/>
            <person name="Venter J.C."/>
            <person name="White O.R."/>
            <person name="Whitty B.R."/>
            <person name="Youngman P."/>
            <person name="Wolfe K.H."/>
            <person name="Goldman G.H."/>
            <person name="Wortman J.R."/>
            <person name="Jiang B."/>
            <person name="Denning D.W."/>
            <person name="Nierman W.C."/>
        </authorList>
    </citation>
    <scope>NUCLEOTIDE SEQUENCE [LARGE SCALE GENOMIC DNA]</scope>
    <source>
        <strain>ATCC 1007 / CBS 513.65 / DSM 816 / NCTC 3887 / NRRL 1 / QM 1276 / 107</strain>
    </source>
</reference>
<dbReference type="EC" id="3.6.4.13"/>
<dbReference type="EMBL" id="DS027060">
    <property type="protein sequence ID" value="EAW06348.1"/>
    <property type="status" value="ALT_INIT"/>
    <property type="molecule type" value="Genomic_DNA"/>
</dbReference>
<dbReference type="RefSeq" id="XP_001267774.1">
    <property type="nucleotide sequence ID" value="XM_001267773.1"/>
</dbReference>
<dbReference type="SMR" id="A1CSR1"/>
<dbReference type="STRING" id="344612.A1CSR1"/>
<dbReference type="EnsemblFungi" id="EAW06348">
    <property type="protein sequence ID" value="EAW06348"/>
    <property type="gene ID" value="ACLA_080320"/>
</dbReference>
<dbReference type="GeneID" id="4700092"/>
<dbReference type="KEGG" id="act:ACLA_080320"/>
<dbReference type="eggNOG" id="KOG0335">
    <property type="taxonomic scope" value="Eukaryota"/>
</dbReference>
<dbReference type="OrthoDB" id="10256233at2759"/>
<dbReference type="Proteomes" id="UP000006701">
    <property type="component" value="Unassembled WGS sequence"/>
</dbReference>
<dbReference type="GO" id="GO:0005739">
    <property type="term" value="C:mitochondrion"/>
    <property type="evidence" value="ECO:0007669"/>
    <property type="project" value="UniProtKB-SubCell"/>
</dbReference>
<dbReference type="GO" id="GO:0005524">
    <property type="term" value="F:ATP binding"/>
    <property type="evidence" value="ECO:0007669"/>
    <property type="project" value="UniProtKB-KW"/>
</dbReference>
<dbReference type="GO" id="GO:0016887">
    <property type="term" value="F:ATP hydrolysis activity"/>
    <property type="evidence" value="ECO:0007669"/>
    <property type="project" value="RHEA"/>
</dbReference>
<dbReference type="GO" id="GO:0003723">
    <property type="term" value="F:RNA binding"/>
    <property type="evidence" value="ECO:0007669"/>
    <property type="project" value="UniProtKB-KW"/>
</dbReference>
<dbReference type="GO" id="GO:0003724">
    <property type="term" value="F:RNA helicase activity"/>
    <property type="evidence" value="ECO:0007669"/>
    <property type="project" value="UniProtKB-EC"/>
</dbReference>
<dbReference type="CDD" id="cd18787">
    <property type="entry name" value="SF2_C_DEAD"/>
    <property type="match status" value="1"/>
</dbReference>
<dbReference type="Gene3D" id="3.40.50.300">
    <property type="entry name" value="P-loop containing nucleotide triphosphate hydrolases"/>
    <property type="match status" value="2"/>
</dbReference>
<dbReference type="InterPro" id="IPR011545">
    <property type="entry name" value="DEAD/DEAH_box_helicase_dom"/>
</dbReference>
<dbReference type="InterPro" id="IPR014001">
    <property type="entry name" value="Helicase_ATP-bd"/>
</dbReference>
<dbReference type="InterPro" id="IPR001650">
    <property type="entry name" value="Helicase_C-like"/>
</dbReference>
<dbReference type="InterPro" id="IPR027417">
    <property type="entry name" value="P-loop_NTPase"/>
</dbReference>
<dbReference type="PANTHER" id="PTHR47960">
    <property type="entry name" value="DEAD-BOX ATP-DEPENDENT RNA HELICASE 50"/>
    <property type="match status" value="1"/>
</dbReference>
<dbReference type="Pfam" id="PF00270">
    <property type="entry name" value="DEAD"/>
    <property type="match status" value="1"/>
</dbReference>
<dbReference type="Pfam" id="PF00271">
    <property type="entry name" value="Helicase_C"/>
    <property type="match status" value="1"/>
</dbReference>
<dbReference type="SMART" id="SM00487">
    <property type="entry name" value="DEXDc"/>
    <property type="match status" value="1"/>
</dbReference>
<dbReference type="SMART" id="SM00490">
    <property type="entry name" value="HELICc"/>
    <property type="match status" value="1"/>
</dbReference>
<dbReference type="SUPFAM" id="SSF52540">
    <property type="entry name" value="P-loop containing nucleoside triphosphate hydrolases"/>
    <property type="match status" value="1"/>
</dbReference>
<dbReference type="PROSITE" id="PS51192">
    <property type="entry name" value="HELICASE_ATP_BIND_1"/>
    <property type="match status" value="1"/>
</dbReference>
<dbReference type="PROSITE" id="PS51194">
    <property type="entry name" value="HELICASE_CTER"/>
    <property type="match status" value="1"/>
</dbReference>
<dbReference type="PROSITE" id="PS51195">
    <property type="entry name" value="Q_MOTIF"/>
    <property type="match status" value="1"/>
</dbReference>
<accession>A1CSR1</accession>
<gene>
    <name type="primary">mrh4</name>
    <name type="ORF">ACLA_080320</name>
</gene>
<proteinExistence type="inferred from homology"/>
<name>MRH4_ASPCL</name>
<protein>
    <recommendedName>
        <fullName>ATP-dependent RNA helicase mrh4, mitochondrial</fullName>
        <ecNumber>3.6.4.13</ecNumber>
    </recommendedName>
</protein>
<comment type="function">
    <text evidence="1">ATP-binding RNA helicase involved in mitochondrial RNA metabolism. Required for maintenance of mitochondrial DNA (By similarity).</text>
</comment>
<comment type="catalytic activity">
    <reaction>
        <text>ATP + H2O = ADP + phosphate + H(+)</text>
        <dbReference type="Rhea" id="RHEA:13065"/>
        <dbReference type="ChEBI" id="CHEBI:15377"/>
        <dbReference type="ChEBI" id="CHEBI:15378"/>
        <dbReference type="ChEBI" id="CHEBI:30616"/>
        <dbReference type="ChEBI" id="CHEBI:43474"/>
        <dbReference type="ChEBI" id="CHEBI:456216"/>
        <dbReference type="EC" id="3.6.4.13"/>
    </reaction>
</comment>
<comment type="subcellular location">
    <subcellularLocation>
        <location evidence="1">Mitochondrion</location>
    </subcellularLocation>
</comment>
<comment type="domain">
    <text>The Q motif is unique to and characteristic of the DEAD box family of RNA helicases and controls ATP binding and hydrolysis.</text>
</comment>
<comment type="similarity">
    <text evidence="6">Belongs to the DEAD box helicase family. MRH4 subfamily.</text>
</comment>
<comment type="sequence caution" evidence="6">
    <conflict type="erroneous initiation">
        <sequence resource="EMBL-CDS" id="EAW06348"/>
    </conflict>
</comment>
<evidence type="ECO:0000250" key="1"/>
<evidence type="ECO:0000255" key="2"/>
<evidence type="ECO:0000255" key="3">
    <source>
        <dbReference type="PROSITE-ProRule" id="PRU00541"/>
    </source>
</evidence>
<evidence type="ECO:0000255" key="4">
    <source>
        <dbReference type="PROSITE-ProRule" id="PRU00542"/>
    </source>
</evidence>
<evidence type="ECO:0000256" key="5">
    <source>
        <dbReference type="SAM" id="MobiDB-lite"/>
    </source>
</evidence>
<evidence type="ECO:0000305" key="6"/>
<feature type="transit peptide" description="Mitochondrion" evidence="2">
    <location>
        <begin position="1"/>
        <end position="37"/>
    </location>
</feature>
<feature type="chain" id="PRO_0000282708" description="ATP-dependent RNA helicase mrh4, mitochondrial">
    <location>
        <begin position="38"/>
        <end position="632"/>
    </location>
</feature>
<feature type="domain" description="Helicase ATP-binding" evidence="3">
    <location>
        <begin position="194"/>
        <end position="406"/>
    </location>
</feature>
<feature type="domain" description="Helicase C-terminal" evidence="4">
    <location>
        <begin position="460"/>
        <end position="632"/>
    </location>
</feature>
<feature type="region of interest" description="Disordered" evidence="5">
    <location>
        <begin position="49"/>
        <end position="111"/>
    </location>
</feature>
<feature type="short sequence motif" description="Q motif">
    <location>
        <begin position="141"/>
        <end position="174"/>
    </location>
</feature>
<feature type="short sequence motif" description="DEAD box">
    <location>
        <begin position="353"/>
        <end position="356"/>
    </location>
</feature>
<feature type="compositionally biased region" description="Basic and acidic residues" evidence="5">
    <location>
        <begin position="97"/>
        <end position="111"/>
    </location>
</feature>
<feature type="binding site" evidence="3">
    <location>
        <begin position="207"/>
        <end position="214"/>
    </location>
    <ligand>
        <name>ATP</name>
        <dbReference type="ChEBI" id="CHEBI:30616"/>
    </ligand>
</feature>
<organism>
    <name type="scientific">Aspergillus clavatus (strain ATCC 1007 / CBS 513.65 / DSM 816 / NCTC 3887 / NRRL 1 / QM 1276 / 107)</name>
    <dbReference type="NCBI Taxonomy" id="344612"/>
    <lineage>
        <taxon>Eukaryota</taxon>
        <taxon>Fungi</taxon>
        <taxon>Dikarya</taxon>
        <taxon>Ascomycota</taxon>
        <taxon>Pezizomycotina</taxon>
        <taxon>Eurotiomycetes</taxon>
        <taxon>Eurotiomycetidae</taxon>
        <taxon>Eurotiales</taxon>
        <taxon>Aspergillaceae</taxon>
        <taxon>Aspergillus</taxon>
        <taxon>Aspergillus subgen. Fumigati</taxon>
    </lineage>
</organism>
<sequence>MNRLGRMSLPLRSPACLICQTRTTTLIPSSWQTARSMATARLRRKVSRMALSPDVAKPSLNKDRKKRERPGPFAAMNQTEARIRDTPRTRSQAALKRSGDSKEEAQKKESPLYKALKMQTTLAPVPYGKRTAVKAKIADITSFDQFPLLPVVRNSIVSQALPGLMEVTPTPIQRLAIPKLLEESKPDKKPVKTDDDEPHYDQFLLAAETGSGKTLAYLLPVVDAVKRAEAVDKELEKKEEEEKAREREEKMKNKAFDIEPELPPLSNAGRPRAIILVPTSELVAQVGVKVKALSHTVKYRSGMISSNLTPRRIKNTLFHPDGIDILVATPHLLASIAKTEPYLLSRVSHLVLDEADSLLDRSFAPTTTEIISKVAPSLQKLILCSATIPRSLDNLLRKRYPDIKRLTTPNLHAIPRRVQLGVVDIEKDPYRGNRSLACADVIWSIGKAGDSEVSGPYSSFLEPKTKKILVFVNEREEADEVAQFLQSKGIDAHSLSRDSSARKQEEILAEFTEAPPPPSPDEIMLAQKQRRHEDPIPFEMPKRTNSGGSTRRLPNTKVLVTTDLTSRGIDTLAVKTVILYHVPHTTIDFIHRLGRLGRMGKRGRGVVLVGKKDRKDVVKEVREGMFRGQALI</sequence>
<keyword id="KW-0067">ATP-binding</keyword>
<keyword id="KW-0347">Helicase</keyword>
<keyword id="KW-0378">Hydrolase</keyword>
<keyword id="KW-0496">Mitochondrion</keyword>
<keyword id="KW-0547">Nucleotide-binding</keyword>
<keyword id="KW-1185">Reference proteome</keyword>
<keyword id="KW-0694">RNA-binding</keyword>
<keyword id="KW-0809">Transit peptide</keyword>